<organism>
    <name type="scientific">Macaca fascicularis</name>
    <name type="common">Crab-eating macaque</name>
    <name type="synonym">Cynomolgus monkey</name>
    <dbReference type="NCBI Taxonomy" id="9541"/>
    <lineage>
        <taxon>Eukaryota</taxon>
        <taxon>Metazoa</taxon>
        <taxon>Chordata</taxon>
        <taxon>Craniata</taxon>
        <taxon>Vertebrata</taxon>
        <taxon>Euteleostomi</taxon>
        <taxon>Mammalia</taxon>
        <taxon>Eutheria</taxon>
        <taxon>Euarchontoglires</taxon>
        <taxon>Primates</taxon>
        <taxon>Haplorrhini</taxon>
        <taxon>Catarrhini</taxon>
        <taxon>Cercopithecidae</taxon>
        <taxon>Cercopithecinae</taxon>
        <taxon>Macaca</taxon>
    </lineage>
</organism>
<name>CXCR6_MACFA</name>
<proteinExistence type="evidence at transcript level"/>
<protein>
    <recommendedName>
        <fullName>C-X-C chemokine receptor type 6</fullName>
        <shortName>CXC-R6</shortName>
        <shortName>CXCR-6</shortName>
    </recommendedName>
    <alternativeName>
        <fullName>G-protein coupled receptor STRL33</fullName>
    </alternativeName>
    <alternativeName>
        <fullName>G-protein coupled receptor bonzo</fullName>
    </alternativeName>
    <cdAntigenName>CD186</cdAntigenName>
</protein>
<sequence length="343" mass="39473">MAEYDHYEDDGFLNSFNDSSQEEHQDFLQFRKVFLPCMYLVVFVCGLVGNSLVLVISIFYHKLQSLTDVFLVNLPLADLVFVCTLPFWTYAGIHEWIFGQVMCKTLLGVYTINFYTSMLILTCITVDRFIVVVKATKAYNQQAKRMTWGKVICLLIWVISLLVSLPQIIYGNVFNLDKLICGYHDEEISTVVLATQMTLGFFLPLLAMIVCYSVIIKTLLHAGGFQKHRSLKIIFLVMAVFLLTQTPFNLVKLIRSTRWEYYAMTSFHYTIIVTEAIAYLRACLNPVLYAFVSLKFRKNFWKLVKDIGCLPYLGVSHQWKSSEDNSKTFSASHNVEATSMFQL</sequence>
<comment type="function">
    <text>Receptor for the C-X-C chemokine CXCL16. Used as a coreceptor by SIVs and by strains of HIV-2 and m-tropic HIV-1.</text>
</comment>
<comment type="subcellular location">
    <subcellularLocation>
        <location>Cell membrane</location>
        <topology>Multi-pass membrane protein</topology>
    </subcellularLocation>
</comment>
<comment type="similarity">
    <text evidence="2">Belongs to the G-protein coupled receptor 1 family.</text>
</comment>
<evidence type="ECO:0000255" key="1"/>
<evidence type="ECO:0000255" key="2">
    <source>
        <dbReference type="PROSITE-ProRule" id="PRU00521"/>
    </source>
</evidence>
<keyword id="KW-1003">Cell membrane</keyword>
<keyword id="KW-1015">Disulfide bond</keyword>
<keyword id="KW-0297">G-protein coupled receptor</keyword>
<keyword id="KW-0325">Glycoprotein</keyword>
<keyword id="KW-0472">Membrane</keyword>
<keyword id="KW-0675">Receptor</keyword>
<keyword id="KW-1185">Reference proteome</keyword>
<keyword id="KW-0807">Transducer</keyword>
<keyword id="KW-0812">Transmembrane</keyword>
<keyword id="KW-1133">Transmembrane helix</keyword>
<accession>Q9BDS6</accession>
<feature type="chain" id="PRO_0000069366" description="C-X-C chemokine receptor type 6">
    <location>
        <begin position="1"/>
        <end position="343"/>
    </location>
</feature>
<feature type="topological domain" description="Extracellular" evidence="1">
    <location>
        <begin position="1"/>
        <end position="33"/>
    </location>
</feature>
<feature type="transmembrane region" description="Helical; Name=1" evidence="1">
    <location>
        <begin position="34"/>
        <end position="60"/>
    </location>
</feature>
<feature type="topological domain" description="Cytoplasmic" evidence="1">
    <location>
        <begin position="61"/>
        <end position="69"/>
    </location>
</feature>
<feature type="transmembrane region" description="Helical; Name=2" evidence="1">
    <location>
        <begin position="70"/>
        <end position="90"/>
    </location>
</feature>
<feature type="topological domain" description="Extracellular" evidence="1">
    <location>
        <begin position="91"/>
        <end position="104"/>
    </location>
</feature>
<feature type="transmembrane region" description="Helical; Name=3" evidence="1">
    <location>
        <begin position="105"/>
        <end position="126"/>
    </location>
</feature>
<feature type="topological domain" description="Cytoplasmic" evidence="1">
    <location>
        <begin position="127"/>
        <end position="144"/>
    </location>
</feature>
<feature type="transmembrane region" description="Helical; Name=4" evidence="1">
    <location>
        <begin position="145"/>
        <end position="165"/>
    </location>
</feature>
<feature type="topological domain" description="Extracellular" evidence="1">
    <location>
        <begin position="166"/>
        <end position="188"/>
    </location>
</feature>
<feature type="transmembrane region" description="Helical; Name=5" evidence="1">
    <location>
        <begin position="189"/>
        <end position="216"/>
    </location>
</feature>
<feature type="topological domain" description="Cytoplasmic" evidence="1">
    <location>
        <begin position="217"/>
        <end position="232"/>
    </location>
</feature>
<feature type="transmembrane region" description="Helical; Name=6" evidence="1">
    <location>
        <begin position="233"/>
        <end position="260"/>
    </location>
</feature>
<feature type="topological domain" description="Extracellular" evidence="1">
    <location>
        <begin position="261"/>
        <end position="276"/>
    </location>
</feature>
<feature type="transmembrane region" description="Helical; Name=7" evidence="1">
    <location>
        <begin position="277"/>
        <end position="294"/>
    </location>
</feature>
<feature type="topological domain" description="Cytoplasmic" evidence="1">
    <location>
        <begin position="295"/>
        <end position="343"/>
    </location>
</feature>
<feature type="glycosylation site" description="N-linked (GlcNAc...) asparagine" evidence="1">
    <location>
        <position position="17"/>
    </location>
</feature>
<feature type="disulfide bond" evidence="2">
    <location>
        <begin position="103"/>
        <end position="181"/>
    </location>
</feature>
<dbReference type="EMBL" id="AF291671">
    <property type="protein sequence ID" value="AAK25742.1"/>
    <property type="molecule type" value="mRNA"/>
</dbReference>
<dbReference type="RefSeq" id="NP_001306326.1">
    <property type="nucleotide sequence ID" value="NM_001319397.1"/>
</dbReference>
<dbReference type="SMR" id="Q9BDS6"/>
<dbReference type="STRING" id="9541.ENSMFAP00000045217"/>
<dbReference type="GlyCosmos" id="Q9BDS6">
    <property type="glycosylation" value="1 site, No reported glycans"/>
</dbReference>
<dbReference type="eggNOG" id="ENOG502QSJQ">
    <property type="taxonomic scope" value="Eukaryota"/>
</dbReference>
<dbReference type="Proteomes" id="UP000233100">
    <property type="component" value="Unplaced"/>
</dbReference>
<dbReference type="GO" id="GO:0009897">
    <property type="term" value="C:external side of plasma membrane"/>
    <property type="evidence" value="ECO:0007669"/>
    <property type="project" value="TreeGrafter"/>
</dbReference>
<dbReference type="GO" id="GO:0019957">
    <property type="term" value="F:C-C chemokine binding"/>
    <property type="evidence" value="ECO:0007669"/>
    <property type="project" value="TreeGrafter"/>
</dbReference>
<dbReference type="GO" id="GO:0016493">
    <property type="term" value="F:C-C chemokine receptor activity"/>
    <property type="evidence" value="ECO:0007669"/>
    <property type="project" value="TreeGrafter"/>
</dbReference>
<dbReference type="GO" id="GO:0016494">
    <property type="term" value="F:C-X-C chemokine receptor activity"/>
    <property type="evidence" value="ECO:0007669"/>
    <property type="project" value="InterPro"/>
</dbReference>
<dbReference type="GO" id="GO:0015026">
    <property type="term" value="F:coreceptor activity"/>
    <property type="evidence" value="ECO:0007669"/>
    <property type="project" value="InterPro"/>
</dbReference>
<dbReference type="GO" id="GO:0019722">
    <property type="term" value="P:calcium-mediated signaling"/>
    <property type="evidence" value="ECO:0007669"/>
    <property type="project" value="TreeGrafter"/>
</dbReference>
<dbReference type="GO" id="GO:0060326">
    <property type="term" value="P:cell chemotaxis"/>
    <property type="evidence" value="ECO:0007669"/>
    <property type="project" value="TreeGrafter"/>
</dbReference>
<dbReference type="GO" id="GO:0006955">
    <property type="term" value="P:immune response"/>
    <property type="evidence" value="ECO:0007669"/>
    <property type="project" value="TreeGrafter"/>
</dbReference>
<dbReference type="GO" id="GO:0006954">
    <property type="term" value="P:inflammatory response"/>
    <property type="evidence" value="ECO:0007669"/>
    <property type="project" value="InterPro"/>
</dbReference>
<dbReference type="GO" id="GO:0007204">
    <property type="term" value="P:positive regulation of cytosolic calcium ion concentration"/>
    <property type="evidence" value="ECO:0007669"/>
    <property type="project" value="TreeGrafter"/>
</dbReference>
<dbReference type="CDD" id="cd15173">
    <property type="entry name" value="7tmA_CXCR6"/>
    <property type="match status" value="1"/>
</dbReference>
<dbReference type="FunFam" id="1.20.1070.10:FF:000035">
    <property type="entry name" value="C-C chemokine receptor type 6"/>
    <property type="match status" value="1"/>
</dbReference>
<dbReference type="Gene3D" id="1.20.1070.10">
    <property type="entry name" value="Rhodopsin 7-helix transmembrane proteins"/>
    <property type="match status" value="1"/>
</dbReference>
<dbReference type="InterPro" id="IPR050119">
    <property type="entry name" value="CCR1-9-like"/>
</dbReference>
<dbReference type="InterPro" id="IPR002235">
    <property type="entry name" value="Chemokine_CXCR6"/>
</dbReference>
<dbReference type="InterPro" id="IPR000355">
    <property type="entry name" value="Chemokine_rcpt"/>
</dbReference>
<dbReference type="InterPro" id="IPR000276">
    <property type="entry name" value="GPCR_Rhodpsn"/>
</dbReference>
<dbReference type="InterPro" id="IPR017452">
    <property type="entry name" value="GPCR_Rhodpsn_7TM"/>
</dbReference>
<dbReference type="PANTHER" id="PTHR10489:SF705">
    <property type="entry name" value="C-X-C CHEMOKINE RECEPTOR TYPE 6"/>
    <property type="match status" value="1"/>
</dbReference>
<dbReference type="PANTHER" id="PTHR10489">
    <property type="entry name" value="CELL ADHESION MOLECULE"/>
    <property type="match status" value="1"/>
</dbReference>
<dbReference type="Pfam" id="PF00001">
    <property type="entry name" value="7tm_1"/>
    <property type="match status" value="1"/>
</dbReference>
<dbReference type="PRINTS" id="PR00657">
    <property type="entry name" value="CCCHEMOKINER"/>
</dbReference>
<dbReference type="PRINTS" id="PR01105">
    <property type="entry name" value="CXCCHMKINER6"/>
</dbReference>
<dbReference type="PRINTS" id="PR00237">
    <property type="entry name" value="GPCRRHODOPSN"/>
</dbReference>
<dbReference type="SUPFAM" id="SSF81321">
    <property type="entry name" value="Family A G protein-coupled receptor-like"/>
    <property type="match status" value="1"/>
</dbReference>
<dbReference type="PROSITE" id="PS00237">
    <property type="entry name" value="G_PROTEIN_RECEP_F1_1"/>
    <property type="match status" value="1"/>
</dbReference>
<dbReference type="PROSITE" id="PS50262">
    <property type="entry name" value="G_PROTEIN_RECEP_F1_2"/>
    <property type="match status" value="1"/>
</dbReference>
<gene>
    <name type="primary">CXCR6</name>
    <name type="synonym">BONZO</name>
    <name type="synonym">STRL33</name>
</gene>
<reference key="1">
    <citation type="journal article" date="2001" name="AIDS Res. Hum. Retroviruses">
        <title>Cloning and sequencing of cynomolgus macaque CCR3, GPR15, and STRL33: potential coreceptors for HIV type 1, HIV type 2, and SIV.</title>
        <authorList>
            <person name="Wade-Evans A.M."/>
            <person name="Russell J."/>
            <person name="Jenkins A."/>
            <person name="Javan C."/>
        </authorList>
    </citation>
    <scope>NUCLEOTIDE SEQUENCE [MRNA]</scope>
</reference>